<keyword id="KW-0460">Magnesium</keyword>
<keyword id="KW-0479">Metal-binding</keyword>
<keyword id="KW-0489">Methyltransferase</keyword>
<keyword id="KW-1185">Reference proteome</keyword>
<keyword id="KW-0949">S-adenosyl-L-methionine</keyword>
<keyword id="KW-0808">Transferase</keyword>
<proteinExistence type="evidence at transcript level"/>
<feature type="chain" id="PRO_0000333029" description="Probable S-adenosylmethionine-dependent methyltransferase At5g38780">
    <location>
        <begin position="1"/>
        <end position="361"/>
    </location>
</feature>
<feature type="binding site" evidence="2">
    <location>
        <position position="19"/>
    </location>
    <ligand>
        <name>S-adenosyl-L-homocysteine</name>
        <dbReference type="ChEBI" id="CHEBI:57856"/>
    </ligand>
</feature>
<feature type="binding site" evidence="2">
    <location>
        <position position="64"/>
    </location>
    <ligand>
        <name>S-adenosyl-L-homocysteine</name>
        <dbReference type="ChEBI" id="CHEBI:57856"/>
    </ligand>
</feature>
<feature type="binding site" evidence="2">
    <location>
        <position position="69"/>
    </location>
    <ligand>
        <name>S-adenosyl-L-homocysteine</name>
        <dbReference type="ChEBI" id="CHEBI:57856"/>
    </ligand>
</feature>
<feature type="binding site" evidence="2">
    <location>
        <position position="106"/>
    </location>
    <ligand>
        <name>S-adenosyl-L-homocysteine</name>
        <dbReference type="ChEBI" id="CHEBI:57856"/>
    </ligand>
</feature>
<feature type="binding site" evidence="1">
    <location>
        <position position="107"/>
    </location>
    <ligand>
        <name>S-adenosyl-L-homocysteine</name>
        <dbReference type="ChEBI" id="CHEBI:57856"/>
    </ligand>
</feature>
<feature type="binding site" evidence="2">
    <location>
        <position position="135"/>
    </location>
    <ligand>
        <name>S-adenosyl-L-homocysteine</name>
        <dbReference type="ChEBI" id="CHEBI:57856"/>
    </ligand>
</feature>
<feature type="binding site" evidence="2">
    <location>
        <position position="136"/>
    </location>
    <ligand>
        <name>S-adenosyl-L-homocysteine</name>
        <dbReference type="ChEBI" id="CHEBI:57856"/>
    </ligand>
</feature>
<feature type="binding site" evidence="3">
    <location>
        <position position="174"/>
    </location>
    <ligand>
        <name>Mg(2+)</name>
        <dbReference type="ChEBI" id="CHEBI:18420"/>
    </ligand>
</feature>
<feature type="binding site" evidence="3">
    <location>
        <position position="260"/>
    </location>
    <ligand>
        <name>Mg(2+)</name>
        <dbReference type="ChEBI" id="CHEBI:18420"/>
    </ligand>
</feature>
<feature type="binding site" evidence="3">
    <location>
        <position position="262"/>
    </location>
    <ligand>
        <name>Mg(2+)</name>
        <dbReference type="ChEBI" id="CHEBI:18420"/>
    </ligand>
</feature>
<feature type="binding site" evidence="3">
    <location>
        <position position="263"/>
    </location>
    <ligand>
        <name>Mg(2+)</name>
        <dbReference type="ChEBI" id="CHEBI:18420"/>
    </ligand>
</feature>
<name>MT878_ARATH</name>
<sequence>MSTSSQSYPMSGGDDQHSYIHNSSYQKAGIDGVQEKARQYILENLDLLNMNPNLSTFTIADFGCSIGPNTFHAVQNIIDIVKLKHLKESQEDSRVAPLEFQVYFNDLPNNDFNTLFRTQPPSSKQEYFSVGVPGSFYGRVLPRNSIHIGNTSFTTHWLSKVPEEVCDKNSLAWNKNYIHCNNLIEEVTEAYKVQFEKDMGVFLKARAEELVPGGLMITLGQCLPDGVAMYETWSGIVKDTIGDCLQDMATLGVTTEEKIEMFNLPVYFPQVSELKGAIEQNIRFTIEMMEIVSHPLEAVQLSNNFITSMYRAILSTVIERHFGGSVVDELFRQFAKKLSEHPIDFEKCKKQMVYHIVLKRK</sequence>
<reference key="1">
    <citation type="journal article" date="1998" name="DNA Res.">
        <title>Structural analysis of Arabidopsis thaliana chromosome 5. V. Sequence features of the regions of 1,381,565 bp covered by twenty one physically assigned P1 and TAC clones.</title>
        <authorList>
            <person name="Kaneko T."/>
            <person name="Kotani H."/>
            <person name="Nakamura Y."/>
            <person name="Sato S."/>
            <person name="Asamizu E."/>
            <person name="Miyajima N."/>
            <person name="Tabata S."/>
        </authorList>
    </citation>
    <scope>NUCLEOTIDE SEQUENCE [LARGE SCALE GENOMIC DNA]</scope>
    <source>
        <strain>cv. Columbia</strain>
    </source>
</reference>
<reference key="2">
    <citation type="journal article" date="2017" name="Plant J.">
        <title>Araport11: a complete reannotation of the Arabidopsis thaliana reference genome.</title>
        <authorList>
            <person name="Cheng C.Y."/>
            <person name="Krishnakumar V."/>
            <person name="Chan A.P."/>
            <person name="Thibaud-Nissen F."/>
            <person name="Schobel S."/>
            <person name="Town C.D."/>
        </authorList>
    </citation>
    <scope>GENOME REANNOTATION</scope>
    <source>
        <strain>cv. Columbia</strain>
    </source>
</reference>
<reference key="3">
    <citation type="journal article" date="2003" name="Science">
        <title>Empirical analysis of transcriptional activity in the Arabidopsis genome.</title>
        <authorList>
            <person name="Yamada K."/>
            <person name="Lim J."/>
            <person name="Dale J.M."/>
            <person name="Chen H."/>
            <person name="Shinn P."/>
            <person name="Palm C.J."/>
            <person name="Southwick A.M."/>
            <person name="Wu H.C."/>
            <person name="Kim C.J."/>
            <person name="Nguyen M."/>
            <person name="Pham P.K."/>
            <person name="Cheuk R.F."/>
            <person name="Karlin-Newmann G."/>
            <person name="Liu S.X."/>
            <person name="Lam B."/>
            <person name="Sakano H."/>
            <person name="Wu T."/>
            <person name="Yu G."/>
            <person name="Miranda M."/>
            <person name="Quach H.L."/>
            <person name="Tripp M."/>
            <person name="Chang C.H."/>
            <person name="Lee J.M."/>
            <person name="Toriumi M.J."/>
            <person name="Chan M.M."/>
            <person name="Tang C.C."/>
            <person name="Onodera C.S."/>
            <person name="Deng J.M."/>
            <person name="Akiyama K."/>
            <person name="Ansari Y."/>
            <person name="Arakawa T."/>
            <person name="Banh J."/>
            <person name="Banno F."/>
            <person name="Bowser L."/>
            <person name="Brooks S.Y."/>
            <person name="Carninci P."/>
            <person name="Chao Q."/>
            <person name="Choy N."/>
            <person name="Enju A."/>
            <person name="Goldsmith A.D."/>
            <person name="Gurjal M."/>
            <person name="Hansen N.F."/>
            <person name="Hayashizaki Y."/>
            <person name="Johnson-Hopson C."/>
            <person name="Hsuan V.W."/>
            <person name="Iida K."/>
            <person name="Karnes M."/>
            <person name="Khan S."/>
            <person name="Koesema E."/>
            <person name="Ishida J."/>
            <person name="Jiang P.X."/>
            <person name="Jones T."/>
            <person name="Kawai J."/>
            <person name="Kamiya A."/>
            <person name="Meyers C."/>
            <person name="Nakajima M."/>
            <person name="Narusaka M."/>
            <person name="Seki M."/>
            <person name="Sakurai T."/>
            <person name="Satou M."/>
            <person name="Tamse R."/>
            <person name="Vaysberg M."/>
            <person name="Wallender E.K."/>
            <person name="Wong C."/>
            <person name="Yamamura Y."/>
            <person name="Yuan S."/>
            <person name="Shinozaki K."/>
            <person name="Davis R.W."/>
            <person name="Theologis A."/>
            <person name="Ecker J.R."/>
        </authorList>
    </citation>
    <scope>NUCLEOTIDE SEQUENCE [LARGE SCALE MRNA]</scope>
    <source>
        <strain>cv. Columbia</strain>
    </source>
</reference>
<organism>
    <name type="scientific">Arabidopsis thaliana</name>
    <name type="common">Mouse-ear cress</name>
    <dbReference type="NCBI Taxonomy" id="3702"/>
    <lineage>
        <taxon>Eukaryota</taxon>
        <taxon>Viridiplantae</taxon>
        <taxon>Streptophyta</taxon>
        <taxon>Embryophyta</taxon>
        <taxon>Tracheophyta</taxon>
        <taxon>Spermatophyta</taxon>
        <taxon>Magnoliopsida</taxon>
        <taxon>eudicotyledons</taxon>
        <taxon>Gunneridae</taxon>
        <taxon>Pentapetalae</taxon>
        <taxon>rosids</taxon>
        <taxon>malvids</taxon>
        <taxon>Brassicales</taxon>
        <taxon>Brassicaceae</taxon>
        <taxon>Camelineae</taxon>
        <taxon>Arabidopsis</taxon>
    </lineage>
</organism>
<comment type="cofactor">
    <cofactor evidence="3">
        <name>Mg(2+)</name>
        <dbReference type="ChEBI" id="CHEBI:18420"/>
    </cofactor>
    <text evidence="3">Binds 1 Mg(2+) ion per subunit.</text>
</comment>
<comment type="subunit">
    <text evidence="3">Homodimer.</text>
</comment>
<comment type="similarity">
    <text evidence="4">Belongs to the methyltransferase superfamily. Type-7 methyltransferase family.</text>
</comment>
<gene>
    <name type="ordered locus">At5g38780</name>
    <name type="ORF">MKD10.80</name>
</gene>
<dbReference type="EC" id="2.1.1.-"/>
<dbReference type="EMBL" id="AB011478">
    <property type="protein sequence ID" value="BAB10134.1"/>
    <property type="molecule type" value="Genomic_DNA"/>
</dbReference>
<dbReference type="EMBL" id="CP002688">
    <property type="protein sequence ID" value="AED94359.1"/>
    <property type="molecule type" value="Genomic_DNA"/>
</dbReference>
<dbReference type="EMBL" id="AY063824">
    <property type="protein sequence ID" value="AAL36180.1"/>
    <property type="molecule type" value="mRNA"/>
</dbReference>
<dbReference type="EMBL" id="AY091280">
    <property type="protein sequence ID" value="AAM14219.1"/>
    <property type="molecule type" value="mRNA"/>
</dbReference>
<dbReference type="RefSeq" id="NP_198694.1">
    <property type="nucleotide sequence ID" value="NM_123239.4"/>
</dbReference>
<dbReference type="SMR" id="Q9FKR0"/>
<dbReference type="PaxDb" id="3702-AT5G38780.1"/>
<dbReference type="ProteomicsDB" id="250805"/>
<dbReference type="EnsemblPlants" id="AT5G38780.1">
    <property type="protein sequence ID" value="AT5G38780.1"/>
    <property type="gene ID" value="AT5G38780"/>
</dbReference>
<dbReference type="GeneID" id="833869"/>
<dbReference type="Gramene" id="AT5G38780.1">
    <property type="protein sequence ID" value="AT5G38780.1"/>
    <property type="gene ID" value="AT5G38780"/>
</dbReference>
<dbReference type="KEGG" id="ath:AT5G38780"/>
<dbReference type="Araport" id="AT5G38780"/>
<dbReference type="TAIR" id="AT5G38780"/>
<dbReference type="eggNOG" id="ENOG502QUIN">
    <property type="taxonomic scope" value="Eukaryota"/>
</dbReference>
<dbReference type="HOGENOM" id="CLU_019628_1_0_1"/>
<dbReference type="InParanoid" id="Q9FKR0"/>
<dbReference type="OMA" id="TWEGIVI"/>
<dbReference type="PhylomeDB" id="Q9FKR0"/>
<dbReference type="BioCyc" id="ARA:AT5G38780-MONOMER"/>
<dbReference type="PRO" id="PR:Q9FKR0"/>
<dbReference type="Proteomes" id="UP000006548">
    <property type="component" value="Chromosome 5"/>
</dbReference>
<dbReference type="ExpressionAtlas" id="Q9FKR0">
    <property type="expression patterns" value="baseline and differential"/>
</dbReference>
<dbReference type="GO" id="GO:0046872">
    <property type="term" value="F:metal ion binding"/>
    <property type="evidence" value="ECO:0007669"/>
    <property type="project" value="UniProtKB-KW"/>
</dbReference>
<dbReference type="GO" id="GO:0008168">
    <property type="term" value="F:methyltransferase activity"/>
    <property type="evidence" value="ECO:0007669"/>
    <property type="project" value="UniProtKB-KW"/>
</dbReference>
<dbReference type="GO" id="GO:0032259">
    <property type="term" value="P:methylation"/>
    <property type="evidence" value="ECO:0007669"/>
    <property type="project" value="UniProtKB-KW"/>
</dbReference>
<dbReference type="Gene3D" id="1.10.1200.270">
    <property type="entry name" value="Methyltransferase, alpha-helical capping domain"/>
    <property type="match status" value="1"/>
</dbReference>
<dbReference type="Gene3D" id="3.40.50.150">
    <property type="entry name" value="Vaccinia Virus protein VP39"/>
    <property type="match status" value="1"/>
</dbReference>
<dbReference type="InterPro" id="IPR005299">
    <property type="entry name" value="MeTrfase_7"/>
</dbReference>
<dbReference type="InterPro" id="IPR042086">
    <property type="entry name" value="MeTrfase_capping"/>
</dbReference>
<dbReference type="InterPro" id="IPR029063">
    <property type="entry name" value="SAM-dependent_MTases_sf"/>
</dbReference>
<dbReference type="PANTHER" id="PTHR31009">
    <property type="entry name" value="S-ADENOSYL-L-METHIONINE:CARBOXYL METHYLTRANSFERASE FAMILY PROTEIN"/>
    <property type="match status" value="1"/>
</dbReference>
<dbReference type="Pfam" id="PF03492">
    <property type="entry name" value="Methyltransf_7"/>
    <property type="match status" value="1"/>
</dbReference>
<dbReference type="SUPFAM" id="SSF53335">
    <property type="entry name" value="S-adenosyl-L-methionine-dependent methyltransferases"/>
    <property type="match status" value="1"/>
</dbReference>
<evidence type="ECO:0000250" key="1">
    <source>
        <dbReference type="UniProtKB" id="A0A6C0WW36"/>
    </source>
</evidence>
<evidence type="ECO:0000250" key="2">
    <source>
        <dbReference type="UniProtKB" id="B2KPR3"/>
    </source>
</evidence>
<evidence type="ECO:0000250" key="3">
    <source>
        <dbReference type="UniProtKB" id="Q9FLN8"/>
    </source>
</evidence>
<evidence type="ECO:0000305" key="4"/>
<protein>
    <recommendedName>
        <fullName>Probable S-adenosylmethionine-dependent methyltransferase At5g38780</fullName>
        <ecNumber>2.1.1.-</ecNumber>
    </recommendedName>
</protein>
<accession>Q9FKR0</accession>